<comment type="function">
    <text evidence="1">Involved in the aerobic and anaerobic degradation of long-chain fatty acids via beta-oxidation cycle. Catalyzes the formation of 3-oxoacyl-CoA from enoyl-CoA via L-3-hydroxyacyl-CoA. It can also use D-3-hydroxyacyl-CoA and cis-3-enoyl-CoA as substrate.</text>
</comment>
<comment type="catalytic activity">
    <reaction evidence="1">
        <text>a (3S)-3-hydroxyacyl-CoA + NAD(+) = a 3-oxoacyl-CoA + NADH + H(+)</text>
        <dbReference type="Rhea" id="RHEA:22432"/>
        <dbReference type="ChEBI" id="CHEBI:15378"/>
        <dbReference type="ChEBI" id="CHEBI:57318"/>
        <dbReference type="ChEBI" id="CHEBI:57540"/>
        <dbReference type="ChEBI" id="CHEBI:57945"/>
        <dbReference type="ChEBI" id="CHEBI:90726"/>
        <dbReference type="EC" id="1.1.1.35"/>
    </reaction>
</comment>
<comment type="catalytic activity">
    <reaction evidence="1">
        <text>a (3S)-3-hydroxyacyl-CoA = a (2E)-enoyl-CoA + H2O</text>
        <dbReference type="Rhea" id="RHEA:16105"/>
        <dbReference type="ChEBI" id="CHEBI:15377"/>
        <dbReference type="ChEBI" id="CHEBI:57318"/>
        <dbReference type="ChEBI" id="CHEBI:58856"/>
        <dbReference type="EC" id="4.2.1.17"/>
    </reaction>
</comment>
<comment type="catalytic activity">
    <reaction evidence="1">
        <text>a 4-saturated-(3S)-3-hydroxyacyl-CoA = a (3E)-enoyl-CoA + H2O</text>
        <dbReference type="Rhea" id="RHEA:20724"/>
        <dbReference type="ChEBI" id="CHEBI:15377"/>
        <dbReference type="ChEBI" id="CHEBI:58521"/>
        <dbReference type="ChEBI" id="CHEBI:137480"/>
        <dbReference type="EC" id="4.2.1.17"/>
    </reaction>
</comment>
<comment type="catalytic activity">
    <reaction evidence="1">
        <text>(3S)-3-hydroxybutanoyl-CoA = (3R)-3-hydroxybutanoyl-CoA</text>
        <dbReference type="Rhea" id="RHEA:21760"/>
        <dbReference type="ChEBI" id="CHEBI:57315"/>
        <dbReference type="ChEBI" id="CHEBI:57316"/>
        <dbReference type="EC" id="5.1.2.3"/>
    </reaction>
</comment>
<comment type="catalytic activity">
    <reaction evidence="1">
        <text>a (3Z)-enoyl-CoA = a 4-saturated (2E)-enoyl-CoA</text>
        <dbReference type="Rhea" id="RHEA:45900"/>
        <dbReference type="ChEBI" id="CHEBI:85097"/>
        <dbReference type="ChEBI" id="CHEBI:85489"/>
        <dbReference type="EC" id="5.3.3.8"/>
    </reaction>
</comment>
<comment type="catalytic activity">
    <reaction evidence="1">
        <text>a (3E)-enoyl-CoA = a 4-saturated (2E)-enoyl-CoA</text>
        <dbReference type="Rhea" id="RHEA:45228"/>
        <dbReference type="ChEBI" id="CHEBI:58521"/>
        <dbReference type="ChEBI" id="CHEBI:85097"/>
        <dbReference type="EC" id="5.3.3.8"/>
    </reaction>
</comment>
<comment type="pathway">
    <text evidence="1">Lipid metabolism; fatty acid beta-oxidation.</text>
</comment>
<comment type="subunit">
    <text evidence="1">Heterotetramer of two alpha chains (FadB) and two beta chains (FadA).</text>
</comment>
<comment type="similarity">
    <text evidence="1">In the N-terminal section; belongs to the enoyl-CoA hydratase/isomerase family.</text>
</comment>
<comment type="similarity">
    <text evidence="1">In the C-terminal section; belongs to the 3-hydroxyacyl-CoA dehydrogenase family.</text>
</comment>
<evidence type="ECO:0000255" key="1">
    <source>
        <dbReference type="HAMAP-Rule" id="MF_01621"/>
    </source>
</evidence>
<gene>
    <name evidence="1" type="primary">fadB</name>
    <name type="ordered locus">YPDSF_3386</name>
</gene>
<keyword id="KW-0276">Fatty acid metabolism</keyword>
<keyword id="KW-0413">Isomerase</keyword>
<keyword id="KW-0442">Lipid degradation</keyword>
<keyword id="KW-0443">Lipid metabolism</keyword>
<keyword id="KW-0456">Lyase</keyword>
<keyword id="KW-0511">Multifunctional enzyme</keyword>
<keyword id="KW-0520">NAD</keyword>
<keyword id="KW-0560">Oxidoreductase</keyword>
<sequence>MLYQSETLQLHWLENGIAELVFDAPGSVNKLDTKTVANLGEALNVLEKQSELKGLLLRSAKTALIVGADITEFLSLFNAPPEKLHQWLVFANTIFNRLEDLPVPTISAINGYALGGGCECILATDFRIASPEARIGLPETKLGIMPGFGGSVRLPRLLGADSALEIIATGKDVTANDALKIGLVDAVVDPEKLVGSALTMLKQAIDGKLDWQAARRPKLEPLKLNPTEAAMCFTIAKGRVMQVAGKHYPAPLTAVKTIEAAAKFGRTEALNLETNSFVPLAGSNEARALVGIFLNDQYVKAQAKKLSKGVAAPKLAAVLGAGIMGGGIAYQSALKSVPVIMKDINENSLDLGMNEAAKLLNKQLERGKVDGLKMASILATIRPTLDYAGIERAQVIVEAVVENPKVKAAVLAEVEALIGEDTVLASNTSTIPIDQLAKSLKRPENFCGMHFFNPVHRMPLVEIIRGAKTSDKTLAAVVAYATQMGKTPIVVNDCPGFFVNRVLFPYLAGFGMLVRDGGDFHQIDKVMEKQFGWPMGPAYLLDVVGIDTAHHAQAVMAAGFPERMNKDYRDAVDVMFDNQRFGQKNGQGFYRYTQDAKGKPRKENDEQVDKLLAEISQPLQEFSDEDIIARTMIPMINEVVRCLEEGIIASAAEGDMALVYGLGFPPFHGGVFRYLDTLGSANYVEMAQRYAHLGALYHVPAGLRAKAEHNESYYPVAAALLDVSTNQPA</sequence>
<organism>
    <name type="scientific">Yersinia pestis (strain Pestoides F)</name>
    <dbReference type="NCBI Taxonomy" id="386656"/>
    <lineage>
        <taxon>Bacteria</taxon>
        <taxon>Pseudomonadati</taxon>
        <taxon>Pseudomonadota</taxon>
        <taxon>Gammaproteobacteria</taxon>
        <taxon>Enterobacterales</taxon>
        <taxon>Yersiniaceae</taxon>
        <taxon>Yersinia</taxon>
    </lineage>
</organism>
<reference key="1">
    <citation type="submission" date="2007-02" db="EMBL/GenBank/DDBJ databases">
        <title>Complete sequence of chromosome of Yersinia pestis Pestoides F.</title>
        <authorList>
            <consortium name="US DOE Joint Genome Institute"/>
            <person name="Copeland A."/>
            <person name="Lucas S."/>
            <person name="Lapidus A."/>
            <person name="Barry K."/>
            <person name="Detter J.C."/>
            <person name="Glavina del Rio T."/>
            <person name="Hammon N."/>
            <person name="Israni S."/>
            <person name="Dalin E."/>
            <person name="Tice H."/>
            <person name="Pitluck S."/>
            <person name="Di Bartolo G."/>
            <person name="Chain P."/>
            <person name="Malfatti S."/>
            <person name="Shin M."/>
            <person name="Vergez L."/>
            <person name="Schmutz J."/>
            <person name="Larimer F."/>
            <person name="Land M."/>
            <person name="Hauser L."/>
            <person name="Worsham P."/>
            <person name="Chu M."/>
            <person name="Bearden S."/>
            <person name="Garcia E."/>
            <person name="Richardson P."/>
        </authorList>
    </citation>
    <scope>NUCLEOTIDE SEQUENCE [LARGE SCALE GENOMIC DNA]</scope>
    <source>
        <strain>Pestoides F</strain>
    </source>
</reference>
<dbReference type="EC" id="4.2.1.17" evidence="1"/>
<dbReference type="EC" id="5.1.2.3" evidence="1"/>
<dbReference type="EC" id="5.3.3.8" evidence="1"/>
<dbReference type="EC" id="1.1.1.35" evidence="1"/>
<dbReference type="EMBL" id="CP000668">
    <property type="protein sequence ID" value="ABP41739.1"/>
    <property type="molecule type" value="Genomic_DNA"/>
</dbReference>
<dbReference type="RefSeq" id="WP_002211546.1">
    <property type="nucleotide sequence ID" value="NZ_CP009715.1"/>
</dbReference>
<dbReference type="SMR" id="A4TR27"/>
<dbReference type="GeneID" id="57974942"/>
<dbReference type="KEGG" id="ypp:YPDSF_3386"/>
<dbReference type="PATRIC" id="fig|386656.14.peg.942"/>
<dbReference type="UniPathway" id="UPA00659"/>
<dbReference type="GO" id="GO:0036125">
    <property type="term" value="C:fatty acid beta-oxidation multienzyme complex"/>
    <property type="evidence" value="ECO:0007669"/>
    <property type="project" value="InterPro"/>
</dbReference>
<dbReference type="GO" id="GO:0008692">
    <property type="term" value="F:3-hydroxybutyryl-CoA epimerase activity"/>
    <property type="evidence" value="ECO:0007669"/>
    <property type="project" value="UniProtKB-UniRule"/>
</dbReference>
<dbReference type="GO" id="GO:0004165">
    <property type="term" value="F:delta(3)-delta(2)-enoyl-CoA isomerase activity"/>
    <property type="evidence" value="ECO:0007669"/>
    <property type="project" value="UniProtKB-UniRule"/>
</dbReference>
<dbReference type="GO" id="GO:0004300">
    <property type="term" value="F:enoyl-CoA hydratase activity"/>
    <property type="evidence" value="ECO:0007669"/>
    <property type="project" value="UniProtKB-UniRule"/>
</dbReference>
<dbReference type="GO" id="GO:0016509">
    <property type="term" value="F:long-chain-3-hydroxyacyl-CoA dehydrogenase activity"/>
    <property type="evidence" value="ECO:0007669"/>
    <property type="project" value="TreeGrafter"/>
</dbReference>
<dbReference type="GO" id="GO:0070403">
    <property type="term" value="F:NAD+ binding"/>
    <property type="evidence" value="ECO:0007669"/>
    <property type="project" value="InterPro"/>
</dbReference>
<dbReference type="GO" id="GO:0006635">
    <property type="term" value="P:fatty acid beta-oxidation"/>
    <property type="evidence" value="ECO:0007669"/>
    <property type="project" value="UniProtKB-UniRule"/>
</dbReference>
<dbReference type="CDD" id="cd06558">
    <property type="entry name" value="crotonase-like"/>
    <property type="match status" value="1"/>
</dbReference>
<dbReference type="FunFam" id="1.10.1040.50:FF:000001">
    <property type="entry name" value="Fatty acid oxidation complex subunit alpha"/>
    <property type="match status" value="1"/>
</dbReference>
<dbReference type="FunFam" id="3.90.226.10:FF:000018">
    <property type="entry name" value="Fatty acid oxidation complex subunit alpha"/>
    <property type="match status" value="1"/>
</dbReference>
<dbReference type="FunFam" id="3.40.50.720:FF:000009">
    <property type="entry name" value="Fatty oxidation complex, alpha subunit"/>
    <property type="match status" value="1"/>
</dbReference>
<dbReference type="Gene3D" id="1.10.1040.50">
    <property type="match status" value="1"/>
</dbReference>
<dbReference type="Gene3D" id="3.90.226.10">
    <property type="entry name" value="2-enoyl-CoA Hydratase, Chain A, domain 1"/>
    <property type="match status" value="1"/>
</dbReference>
<dbReference type="Gene3D" id="3.40.50.720">
    <property type="entry name" value="NAD(P)-binding Rossmann-like Domain"/>
    <property type="match status" value="1"/>
</dbReference>
<dbReference type="HAMAP" id="MF_01621">
    <property type="entry name" value="FadB"/>
    <property type="match status" value="1"/>
</dbReference>
<dbReference type="InterPro" id="IPR006180">
    <property type="entry name" value="3-OHacyl-CoA_DH_CS"/>
</dbReference>
<dbReference type="InterPro" id="IPR006176">
    <property type="entry name" value="3-OHacyl-CoA_DH_NAD-bd"/>
</dbReference>
<dbReference type="InterPro" id="IPR006108">
    <property type="entry name" value="3HC_DH_C"/>
</dbReference>
<dbReference type="InterPro" id="IPR008927">
    <property type="entry name" value="6-PGluconate_DH-like_C_sf"/>
</dbReference>
<dbReference type="InterPro" id="IPR029045">
    <property type="entry name" value="ClpP/crotonase-like_dom_sf"/>
</dbReference>
<dbReference type="InterPro" id="IPR018376">
    <property type="entry name" value="Enoyl-CoA_hyd/isom_CS"/>
</dbReference>
<dbReference type="InterPro" id="IPR001753">
    <property type="entry name" value="Enoyl-CoA_hydra/iso"/>
</dbReference>
<dbReference type="InterPro" id="IPR050136">
    <property type="entry name" value="FA_oxidation_alpha_subunit"/>
</dbReference>
<dbReference type="InterPro" id="IPR012799">
    <property type="entry name" value="FadB"/>
</dbReference>
<dbReference type="InterPro" id="IPR036291">
    <property type="entry name" value="NAD(P)-bd_dom_sf"/>
</dbReference>
<dbReference type="NCBIfam" id="TIGR02437">
    <property type="entry name" value="FadB"/>
    <property type="match status" value="1"/>
</dbReference>
<dbReference type="NCBIfam" id="NF008727">
    <property type="entry name" value="PRK11730.1"/>
    <property type="match status" value="1"/>
</dbReference>
<dbReference type="PANTHER" id="PTHR43612">
    <property type="entry name" value="TRIFUNCTIONAL ENZYME SUBUNIT ALPHA"/>
    <property type="match status" value="1"/>
</dbReference>
<dbReference type="PANTHER" id="PTHR43612:SF3">
    <property type="entry name" value="TRIFUNCTIONAL ENZYME SUBUNIT ALPHA, MITOCHONDRIAL"/>
    <property type="match status" value="1"/>
</dbReference>
<dbReference type="Pfam" id="PF00725">
    <property type="entry name" value="3HCDH"/>
    <property type="match status" value="1"/>
</dbReference>
<dbReference type="Pfam" id="PF02737">
    <property type="entry name" value="3HCDH_N"/>
    <property type="match status" value="1"/>
</dbReference>
<dbReference type="Pfam" id="PF00378">
    <property type="entry name" value="ECH_1"/>
    <property type="match status" value="1"/>
</dbReference>
<dbReference type="SUPFAM" id="SSF48179">
    <property type="entry name" value="6-phosphogluconate dehydrogenase C-terminal domain-like"/>
    <property type="match status" value="2"/>
</dbReference>
<dbReference type="SUPFAM" id="SSF52096">
    <property type="entry name" value="ClpP/crotonase"/>
    <property type="match status" value="1"/>
</dbReference>
<dbReference type="SUPFAM" id="SSF51735">
    <property type="entry name" value="NAD(P)-binding Rossmann-fold domains"/>
    <property type="match status" value="1"/>
</dbReference>
<dbReference type="PROSITE" id="PS00067">
    <property type="entry name" value="3HCDH"/>
    <property type="match status" value="1"/>
</dbReference>
<dbReference type="PROSITE" id="PS00166">
    <property type="entry name" value="ENOYL_COA_HYDRATASE"/>
    <property type="match status" value="1"/>
</dbReference>
<feature type="chain" id="PRO_1000069586" description="Fatty acid oxidation complex subunit alpha">
    <location>
        <begin position="1"/>
        <end position="729"/>
    </location>
</feature>
<feature type="region of interest" description="Enoyl-CoA hydratase/isomerase" evidence="1">
    <location>
        <begin position="1"/>
        <end position="189"/>
    </location>
</feature>
<feature type="region of interest" description="3-hydroxyacyl-CoA dehydrogenase" evidence="1">
    <location>
        <begin position="311"/>
        <end position="729"/>
    </location>
</feature>
<feature type="active site" description="For 3-hydroxyacyl-CoA dehydrogenase activity" evidence="1">
    <location>
        <position position="450"/>
    </location>
</feature>
<feature type="binding site" evidence="1">
    <location>
        <position position="296"/>
    </location>
    <ligand>
        <name>substrate</name>
    </ligand>
</feature>
<feature type="binding site" evidence="1">
    <location>
        <position position="324"/>
    </location>
    <ligand>
        <name>NAD(+)</name>
        <dbReference type="ChEBI" id="CHEBI:57540"/>
    </ligand>
</feature>
<feature type="binding site" evidence="1">
    <location>
        <position position="343"/>
    </location>
    <ligand>
        <name>NAD(+)</name>
        <dbReference type="ChEBI" id="CHEBI:57540"/>
    </ligand>
</feature>
<feature type="binding site" evidence="1">
    <location>
        <begin position="400"/>
        <end position="402"/>
    </location>
    <ligand>
        <name>NAD(+)</name>
        <dbReference type="ChEBI" id="CHEBI:57540"/>
    </ligand>
</feature>
<feature type="binding site" evidence="1">
    <location>
        <position position="407"/>
    </location>
    <ligand>
        <name>NAD(+)</name>
        <dbReference type="ChEBI" id="CHEBI:57540"/>
    </ligand>
</feature>
<feature type="binding site" evidence="1">
    <location>
        <position position="429"/>
    </location>
    <ligand>
        <name>NAD(+)</name>
        <dbReference type="ChEBI" id="CHEBI:57540"/>
    </ligand>
</feature>
<feature type="binding site" evidence="1">
    <location>
        <position position="453"/>
    </location>
    <ligand>
        <name>NAD(+)</name>
        <dbReference type="ChEBI" id="CHEBI:57540"/>
    </ligand>
</feature>
<feature type="binding site" evidence="1">
    <location>
        <position position="500"/>
    </location>
    <ligand>
        <name>substrate</name>
    </ligand>
</feature>
<feature type="binding site" evidence="1">
    <location>
        <position position="660"/>
    </location>
    <ligand>
        <name>substrate</name>
    </ligand>
</feature>
<feature type="site" description="Important for catalytic activity" evidence="1">
    <location>
        <position position="119"/>
    </location>
</feature>
<feature type="site" description="Important for catalytic activity" evidence="1">
    <location>
        <position position="139"/>
    </location>
</feature>
<accession>A4TR27</accession>
<protein>
    <recommendedName>
        <fullName evidence="1">Fatty acid oxidation complex subunit alpha</fullName>
    </recommendedName>
    <domain>
        <recommendedName>
            <fullName evidence="1">Enoyl-CoA hydratase/Delta(3)-cis-Delta(2)-trans-enoyl-CoA isomerase/3-hydroxybutyryl-CoA epimerase</fullName>
            <ecNumber evidence="1">4.2.1.17</ecNumber>
            <ecNumber evidence="1">5.1.2.3</ecNumber>
            <ecNumber evidence="1">5.3.3.8</ecNumber>
        </recommendedName>
    </domain>
    <domain>
        <recommendedName>
            <fullName evidence="1">3-hydroxyacyl-CoA dehydrogenase</fullName>
            <ecNumber evidence="1">1.1.1.35</ecNumber>
        </recommendedName>
    </domain>
</protein>
<name>FADB_YERPP</name>
<proteinExistence type="inferred from homology"/>